<protein>
    <recommendedName>
        <fullName>Protein Tat</fullName>
    </recommendedName>
    <alternativeName>
        <fullName>E-Tat</fullName>
    </alternativeName>
    <alternativeName>
        <fullName>Transactivating regulatory protein</fullName>
    </alternativeName>
    <alternativeName>
        <fullName>eTat</fullName>
    </alternativeName>
</protein>
<gene>
    <name type="primary">tat</name>
</gene>
<dbReference type="EMBL" id="M87586">
    <property type="protein sequence ID" value="AAA43030.1"/>
    <property type="status" value="ALT_INIT"/>
    <property type="molecule type" value="Genomic_RNA"/>
</dbReference>
<dbReference type="EMBL" id="M87581">
    <property type="status" value="NOT_ANNOTATED_CDS"/>
    <property type="molecule type" value="Genomic_RNA"/>
</dbReference>
<dbReference type="PIR" id="A46357">
    <property type="entry name" value="TNLJS1"/>
</dbReference>
<dbReference type="PDB" id="2PK2">
    <property type="method" value="X-ray"/>
    <property type="resolution" value="2.67 A"/>
    <property type="chains" value="A/B/C/D=19-75"/>
</dbReference>
<dbReference type="PDBsum" id="2PK2"/>
<dbReference type="SMR" id="P32544"/>
<dbReference type="EvolutionaryTrace" id="P32544"/>
<dbReference type="GO" id="GO:0044196">
    <property type="term" value="C:host cell nucleolus"/>
    <property type="evidence" value="ECO:0007669"/>
    <property type="project" value="UniProtKB-SubCell"/>
</dbReference>
<dbReference type="GO" id="GO:0003723">
    <property type="term" value="F:RNA binding"/>
    <property type="evidence" value="ECO:0007669"/>
    <property type="project" value="UniProtKB-KW"/>
</dbReference>
<dbReference type="GO" id="GO:0001070">
    <property type="term" value="F:RNA-binding transcription regulator activity"/>
    <property type="evidence" value="ECO:0007669"/>
    <property type="project" value="InterPro"/>
</dbReference>
<dbReference type="GO" id="GO:0050434">
    <property type="term" value="P:positive regulation of viral transcription"/>
    <property type="evidence" value="ECO:0007669"/>
    <property type="project" value="InterPro"/>
</dbReference>
<dbReference type="Gene3D" id="4.10.210.10">
    <property type="entry name" value="Transactivator Protein (TAT, TAT EIAVY)"/>
    <property type="match status" value="1"/>
</dbReference>
<dbReference type="InterPro" id="IPR001831">
    <property type="entry name" value="IV_Tat"/>
</dbReference>
<dbReference type="Pfam" id="PF00539">
    <property type="entry name" value="Tat"/>
    <property type="match status" value="1"/>
</dbReference>
<accession>P32544</accession>
<name>TAT_EIAVC</name>
<organism>
    <name type="scientific">Equine infectious anemia virus (isolate CL22)</name>
    <name type="common">EIAV</name>
    <dbReference type="NCBI Taxonomy" id="31675"/>
    <lineage>
        <taxon>Viruses</taxon>
        <taxon>Riboviria</taxon>
        <taxon>Pararnavirae</taxon>
        <taxon>Artverviricota</taxon>
        <taxon>Revtraviricetes</taxon>
        <taxon>Ortervirales</taxon>
        <taxon>Retroviridae</taxon>
        <taxon>Orthoretrovirinae</taxon>
        <taxon>Lentivirus</taxon>
        <taxon>Equine infectious anemia virus</taxon>
    </lineage>
</organism>
<proteinExistence type="evidence at protein level"/>
<organismHost>
    <name type="scientific">Equus asinus</name>
    <name type="common">Donkey</name>
    <name type="synonym">Equus africanus asinus</name>
    <dbReference type="NCBI Taxonomy" id="9793"/>
</organismHost>
<organismHost>
    <name type="scientific">Equus caballus</name>
    <name type="common">Horse</name>
    <dbReference type="NCBI Taxonomy" id="9796"/>
</organismHost>
<comment type="function">
    <text evidence="1">Nuclear transcriptional activator of viral gene expression, that is essential for viral transcription from the LTR promoter and replication. Acts as a sequence-specific molecular adapter, directing components of the cellular transcription machinery to the viral RNA to enhance transcription by the RNA polymerase II (RNA pol II) complex, thereby increasing the level of full-length transcripts. Tat associates with the CCNT1/cyclin-T1 component of the P-TEFb complex (CDK9 and CCNT1), which promotes RNA chain elongation. This binding increases Tat's affinity for a branched hairpin structure at the 5'-end of all nascent viral mRNAs referred to as the transactivation responsive RNA element (TAR RNA). The CDK9 component of P-TEFb hyperphosphorylates the C-terminus of RNA Pol II that becomes stabilized and much more processive (By similarity).</text>
</comment>
<comment type="subunit">
    <text evidence="1">Binds to equine CCNT1. Participates in the formation of a complex composed at least of Tat, P-TEFb, TAR RNA, RNA Pol II (By similarity).</text>
</comment>
<comment type="subcellular location">
    <subcellularLocation>
        <location evidence="1">Host nucleus</location>
        <location evidence="1">Host nucleolus</location>
    </subcellularLocation>
</comment>
<comment type="similarity">
    <text evidence="3">Belongs to the lentiviruses Tat family.</text>
</comment>
<comment type="sequence caution" evidence="3">
    <conflict type="erroneous initiation">
        <sequence resource="EMBL-CDS" id="AAA43030"/>
    </conflict>
</comment>
<keyword id="KW-0002">3D-structure</keyword>
<keyword id="KW-0010">Activator</keyword>
<keyword id="KW-1048">Host nucleus</keyword>
<keyword id="KW-0945">Host-virus interaction</keyword>
<keyword id="KW-0694">RNA-binding</keyword>
<keyword id="KW-0804">Transcription</keyword>
<keyword id="KW-0805">Transcription regulation</keyword>
<evidence type="ECO:0000250" key="1"/>
<evidence type="ECO:0000256" key="2">
    <source>
        <dbReference type="SAM" id="MobiDB-lite"/>
    </source>
</evidence>
<evidence type="ECO:0000305" key="3"/>
<reference key="1">
    <citation type="journal article" date="1992" name="J. Virol.">
        <title>The surface envelope protein gene region of equine infectious anemia virus is not an important determinant of tropism in vitro.</title>
        <authorList>
            <person name="Perry S.T."/>
            <person name="Flaherty M.T."/>
            <person name="Kelley M.J."/>
            <person name="Clabough D.L."/>
            <person name="Tronick S.R."/>
            <person name="Coggins L."/>
            <person name="Whetter L."/>
            <person name="Lengel C.R."/>
            <person name="Fuller F."/>
        </authorList>
    </citation>
    <scope>NUCLEOTIDE SEQUENCE [GENOMIC RNA]</scope>
</reference>
<sequence length="75" mass="8414">MADRRIPGTAEENLQKSSGGVPGQNTGGQEARPNYHCQLCFLRSLGIDYLDASLRKKNKQRLKAIQQGRQPQYLL</sequence>
<feature type="chain" id="PRO_0000085487" description="Protein Tat">
    <location>
        <begin position="1"/>
        <end position="75"/>
    </location>
</feature>
<feature type="region of interest" description="Disordered" evidence="2">
    <location>
        <begin position="1"/>
        <end position="30"/>
    </location>
</feature>
<feature type="region of interest" description="Core" evidence="1">
    <location>
        <begin position="35"/>
        <end position="49"/>
    </location>
</feature>
<feature type="region of interest" description="RNA-binding (TAR)" evidence="1">
    <location>
        <begin position="55"/>
        <end position="75"/>
    </location>
</feature>
<feature type="short sequence motif" description="Nuclear localization signal" evidence="1">
    <location>
        <begin position="55"/>
        <end position="63"/>
    </location>
</feature>